<accession>P66818</accession>
<accession>P45466</accession>
<keyword id="KW-0235">DNA replication</keyword>
<keyword id="KW-1185">Reference proteome</keyword>
<evidence type="ECO:0000255" key="1">
    <source>
        <dbReference type="HAMAP-Rule" id="MF_01157"/>
    </source>
</evidence>
<proteinExistence type="inferred from homology"/>
<dbReference type="EMBL" id="AE005174">
    <property type="protein sequence ID" value="AAG58285.1"/>
    <property type="molecule type" value="Genomic_DNA"/>
</dbReference>
<dbReference type="EMBL" id="BA000007">
    <property type="protein sequence ID" value="BAB37453.1"/>
    <property type="molecule type" value="Genomic_DNA"/>
</dbReference>
<dbReference type="PIR" id="A85978">
    <property type="entry name" value="A85978"/>
</dbReference>
<dbReference type="PIR" id="F91132">
    <property type="entry name" value="F91132"/>
</dbReference>
<dbReference type="RefSeq" id="NP_312057.1">
    <property type="nucleotide sequence ID" value="NC_002695.1"/>
</dbReference>
<dbReference type="RefSeq" id="WP_001158034.1">
    <property type="nucleotide sequence ID" value="NZ_VOAI01000014.1"/>
</dbReference>
<dbReference type="SMR" id="P66818"/>
<dbReference type="STRING" id="155864.Z4508"/>
<dbReference type="GeneID" id="916132"/>
<dbReference type="GeneID" id="93778835"/>
<dbReference type="KEGG" id="ece:Z4508"/>
<dbReference type="KEGG" id="ecs:ECs_4030"/>
<dbReference type="PATRIC" id="fig|386585.9.peg.4209"/>
<dbReference type="eggNOG" id="COG0279">
    <property type="taxonomic scope" value="Bacteria"/>
</dbReference>
<dbReference type="HOGENOM" id="CLU_080999_3_1_6"/>
<dbReference type="OMA" id="EMHILMI"/>
<dbReference type="Proteomes" id="UP000000558">
    <property type="component" value="Chromosome"/>
</dbReference>
<dbReference type="Proteomes" id="UP000002519">
    <property type="component" value="Chromosome"/>
</dbReference>
<dbReference type="GO" id="GO:0097367">
    <property type="term" value="F:carbohydrate derivative binding"/>
    <property type="evidence" value="ECO:0007669"/>
    <property type="project" value="InterPro"/>
</dbReference>
<dbReference type="GO" id="GO:1901135">
    <property type="term" value="P:carbohydrate derivative metabolic process"/>
    <property type="evidence" value="ECO:0007669"/>
    <property type="project" value="InterPro"/>
</dbReference>
<dbReference type="GO" id="GO:0006260">
    <property type="term" value="P:DNA replication"/>
    <property type="evidence" value="ECO:0007669"/>
    <property type="project" value="UniProtKB-UniRule"/>
</dbReference>
<dbReference type="CDD" id="cd05006">
    <property type="entry name" value="SIS_GmhA"/>
    <property type="match status" value="1"/>
</dbReference>
<dbReference type="FunFam" id="3.40.50.10490:FF:000006">
    <property type="entry name" value="DnaA initiator-associating protein DiaA"/>
    <property type="match status" value="1"/>
</dbReference>
<dbReference type="Gene3D" id="3.40.50.10490">
    <property type="entry name" value="Glucose-6-phosphate isomerase like protein, domain 1"/>
    <property type="match status" value="1"/>
</dbReference>
<dbReference type="HAMAP" id="MF_01157">
    <property type="entry name" value="SIS_DiaA"/>
    <property type="match status" value="1"/>
</dbReference>
<dbReference type="InterPro" id="IPR023070">
    <property type="entry name" value="DiaA"/>
</dbReference>
<dbReference type="InterPro" id="IPR035461">
    <property type="entry name" value="GmhA/DiaA"/>
</dbReference>
<dbReference type="InterPro" id="IPR001347">
    <property type="entry name" value="SIS_dom"/>
</dbReference>
<dbReference type="InterPro" id="IPR046348">
    <property type="entry name" value="SIS_dom_sf"/>
</dbReference>
<dbReference type="InterPro" id="IPR050099">
    <property type="entry name" value="SIS_GmhA/DiaA_subfam"/>
</dbReference>
<dbReference type="NCBIfam" id="NF008138">
    <property type="entry name" value="PRK10886.1"/>
    <property type="match status" value="1"/>
</dbReference>
<dbReference type="NCBIfam" id="NF010546">
    <property type="entry name" value="PRK13936.1"/>
    <property type="match status" value="1"/>
</dbReference>
<dbReference type="PANTHER" id="PTHR30390:SF6">
    <property type="entry name" value="DNAA INITIATOR-ASSOCIATING PROTEIN DIAA"/>
    <property type="match status" value="1"/>
</dbReference>
<dbReference type="PANTHER" id="PTHR30390">
    <property type="entry name" value="SEDOHEPTULOSE 7-PHOSPHATE ISOMERASE / DNAA INITIATOR-ASSOCIATING FACTOR FOR REPLICATION INITIATION"/>
    <property type="match status" value="1"/>
</dbReference>
<dbReference type="Pfam" id="PF13580">
    <property type="entry name" value="SIS_2"/>
    <property type="match status" value="1"/>
</dbReference>
<dbReference type="SUPFAM" id="SSF53697">
    <property type="entry name" value="SIS domain"/>
    <property type="match status" value="1"/>
</dbReference>
<dbReference type="PROSITE" id="PS51464">
    <property type="entry name" value="SIS"/>
    <property type="match status" value="1"/>
</dbReference>
<comment type="function">
    <text evidence="1">Required for the timely initiation of chromosomal replication via direct interactions with the DnaA initiator protein.</text>
</comment>
<comment type="subunit">
    <text evidence="1">Homotetramer; dimer of dimers.</text>
</comment>
<comment type="similarity">
    <text evidence="1">Belongs to the SIS family. DiaA subfamily.</text>
</comment>
<protein>
    <recommendedName>
        <fullName evidence="1">DnaA initiator-associating protein DiaA</fullName>
    </recommendedName>
</protein>
<organism>
    <name type="scientific">Escherichia coli O157:H7</name>
    <dbReference type="NCBI Taxonomy" id="83334"/>
    <lineage>
        <taxon>Bacteria</taxon>
        <taxon>Pseudomonadati</taxon>
        <taxon>Pseudomonadota</taxon>
        <taxon>Gammaproteobacteria</taxon>
        <taxon>Enterobacterales</taxon>
        <taxon>Enterobacteriaceae</taxon>
        <taxon>Escherichia</taxon>
    </lineage>
</organism>
<gene>
    <name evidence="1" type="primary">diaA</name>
    <name type="ordered locus">Z4508</name>
    <name type="ordered locus">ECs4030</name>
</gene>
<sequence>MQERIKACFTESIQTQIAAAEALPDAISRAAMTLVQSLLNGNKILCCGNGTSAANAQHFAASMINRFETERPSLPAIALNTDNVVLTAIANDRLHDEVYAKQVRALGHAGDVLLAISTRGNSRDIVKAVEAAVTRDMTIVALTGYDGGELAGLLGPQDVEIRIPSHRSARIQEMHMLTVNCLCDLIDNTLFPHQDD</sequence>
<feature type="chain" id="PRO_0000136557" description="DnaA initiator-associating protein DiaA">
    <location>
        <begin position="1"/>
        <end position="196"/>
    </location>
</feature>
<feature type="domain" description="SIS" evidence="1">
    <location>
        <begin position="34"/>
        <end position="196"/>
    </location>
</feature>
<reference key="1">
    <citation type="journal article" date="2001" name="Nature">
        <title>Genome sequence of enterohaemorrhagic Escherichia coli O157:H7.</title>
        <authorList>
            <person name="Perna N.T."/>
            <person name="Plunkett G. III"/>
            <person name="Burland V."/>
            <person name="Mau B."/>
            <person name="Glasner J.D."/>
            <person name="Rose D.J."/>
            <person name="Mayhew G.F."/>
            <person name="Evans P.S."/>
            <person name="Gregor J."/>
            <person name="Kirkpatrick H.A."/>
            <person name="Posfai G."/>
            <person name="Hackett J."/>
            <person name="Klink S."/>
            <person name="Boutin A."/>
            <person name="Shao Y."/>
            <person name="Miller L."/>
            <person name="Grotbeck E.J."/>
            <person name="Davis N.W."/>
            <person name="Lim A."/>
            <person name="Dimalanta E.T."/>
            <person name="Potamousis K."/>
            <person name="Apodaca J."/>
            <person name="Anantharaman T.S."/>
            <person name="Lin J."/>
            <person name="Yen G."/>
            <person name="Schwartz D.C."/>
            <person name="Welch R.A."/>
            <person name="Blattner F.R."/>
        </authorList>
    </citation>
    <scope>NUCLEOTIDE SEQUENCE [LARGE SCALE GENOMIC DNA]</scope>
    <source>
        <strain>O157:H7 / EDL933 / ATCC 700927 / EHEC</strain>
    </source>
</reference>
<reference key="2">
    <citation type="journal article" date="2001" name="DNA Res.">
        <title>Complete genome sequence of enterohemorrhagic Escherichia coli O157:H7 and genomic comparison with a laboratory strain K-12.</title>
        <authorList>
            <person name="Hayashi T."/>
            <person name="Makino K."/>
            <person name="Ohnishi M."/>
            <person name="Kurokawa K."/>
            <person name="Ishii K."/>
            <person name="Yokoyama K."/>
            <person name="Han C.-G."/>
            <person name="Ohtsubo E."/>
            <person name="Nakayama K."/>
            <person name="Murata T."/>
            <person name="Tanaka M."/>
            <person name="Tobe T."/>
            <person name="Iida T."/>
            <person name="Takami H."/>
            <person name="Honda T."/>
            <person name="Sasakawa C."/>
            <person name="Ogasawara N."/>
            <person name="Yasunaga T."/>
            <person name="Kuhara S."/>
            <person name="Shiba T."/>
            <person name="Hattori M."/>
            <person name="Shinagawa H."/>
        </authorList>
    </citation>
    <scope>NUCLEOTIDE SEQUENCE [LARGE SCALE GENOMIC DNA]</scope>
    <source>
        <strain>O157:H7 / Sakai / RIMD 0509952 / EHEC</strain>
    </source>
</reference>
<name>DIAA_ECO57</name>